<keyword id="KW-0238">DNA-binding</keyword>
<keyword id="KW-1185">Reference proteome</keyword>
<keyword id="KW-0804">Transcription</keyword>
<keyword id="KW-0805">Transcription regulation</keyword>
<dbReference type="EMBL" id="U00096">
    <property type="protein sequence ID" value="AAC75308.1"/>
    <property type="molecule type" value="Genomic_DNA"/>
</dbReference>
<dbReference type="EMBL" id="AP009048">
    <property type="protein sequence ID" value="BAA16072.1"/>
    <property type="molecule type" value="Genomic_DNA"/>
</dbReference>
<dbReference type="PIR" id="F64995">
    <property type="entry name" value="F64995"/>
</dbReference>
<dbReference type="RefSeq" id="NP_416751.1">
    <property type="nucleotide sequence ID" value="NC_000913.3"/>
</dbReference>
<dbReference type="RefSeq" id="WP_000894185.1">
    <property type="nucleotide sequence ID" value="NZ_LN832404.1"/>
</dbReference>
<dbReference type="SMR" id="P77732"/>
<dbReference type="BioGRID" id="4261223">
    <property type="interactions" value="135"/>
</dbReference>
<dbReference type="BioGRID" id="849155">
    <property type="interactions" value="2"/>
</dbReference>
<dbReference type="DIP" id="DIP-11956N"/>
<dbReference type="FunCoup" id="P77732">
    <property type="interactions" value="72"/>
</dbReference>
<dbReference type="IntAct" id="P77732">
    <property type="interactions" value="4"/>
</dbReference>
<dbReference type="STRING" id="511145.b2248"/>
<dbReference type="PaxDb" id="511145-b2248"/>
<dbReference type="EnsemblBacteria" id="AAC75308">
    <property type="protein sequence ID" value="AAC75308"/>
    <property type="gene ID" value="b2248"/>
</dbReference>
<dbReference type="GeneID" id="944752"/>
<dbReference type="KEGG" id="ecj:JW2242"/>
<dbReference type="KEGG" id="eco:b2248"/>
<dbReference type="KEGG" id="ecoc:C3026_12560"/>
<dbReference type="PATRIC" id="fig|511145.12.peg.2339"/>
<dbReference type="EchoBASE" id="EB3839"/>
<dbReference type="eggNOG" id="COG1414">
    <property type="taxonomic scope" value="Bacteria"/>
</dbReference>
<dbReference type="HOGENOM" id="CLU_062618_6_0_6"/>
<dbReference type="InParanoid" id="P77732"/>
<dbReference type="OMA" id="TEMHWTS"/>
<dbReference type="OrthoDB" id="9807558at2"/>
<dbReference type="PhylomeDB" id="P77732"/>
<dbReference type="BioCyc" id="EcoCyc:G7161-MONOMER"/>
<dbReference type="PRO" id="PR:P77732"/>
<dbReference type="Proteomes" id="UP000000625">
    <property type="component" value="Chromosome"/>
</dbReference>
<dbReference type="GO" id="GO:0003677">
    <property type="term" value="F:DNA binding"/>
    <property type="evidence" value="ECO:0000318"/>
    <property type="project" value="GO_Central"/>
</dbReference>
<dbReference type="GO" id="GO:0003700">
    <property type="term" value="F:DNA-binding transcription factor activity"/>
    <property type="evidence" value="ECO:0000318"/>
    <property type="project" value="GO_Central"/>
</dbReference>
<dbReference type="GO" id="GO:0045892">
    <property type="term" value="P:negative regulation of DNA-templated transcription"/>
    <property type="evidence" value="ECO:0000318"/>
    <property type="project" value="GO_Central"/>
</dbReference>
<dbReference type="FunFam" id="1.10.10.10:FF:000318">
    <property type="entry name" value="Transcriptional regulator, IclR family"/>
    <property type="match status" value="1"/>
</dbReference>
<dbReference type="FunFam" id="3.30.450.40:FF:000033">
    <property type="entry name" value="Transcriptional regulator, IclR family"/>
    <property type="match status" value="1"/>
</dbReference>
<dbReference type="Gene3D" id="3.30.450.40">
    <property type="match status" value="1"/>
</dbReference>
<dbReference type="Gene3D" id="1.10.10.10">
    <property type="entry name" value="Winged helix-like DNA-binding domain superfamily/Winged helix DNA-binding domain"/>
    <property type="match status" value="1"/>
</dbReference>
<dbReference type="InterPro" id="IPR029016">
    <property type="entry name" value="GAF-like_dom_sf"/>
</dbReference>
<dbReference type="InterPro" id="IPR050707">
    <property type="entry name" value="HTH_MetabolicPath_Reg"/>
</dbReference>
<dbReference type="InterPro" id="IPR014757">
    <property type="entry name" value="Tscrpt_reg_IclR_C"/>
</dbReference>
<dbReference type="InterPro" id="IPR005471">
    <property type="entry name" value="Tscrpt_reg_IclR_N"/>
</dbReference>
<dbReference type="InterPro" id="IPR036388">
    <property type="entry name" value="WH-like_DNA-bd_sf"/>
</dbReference>
<dbReference type="InterPro" id="IPR036390">
    <property type="entry name" value="WH_DNA-bd_sf"/>
</dbReference>
<dbReference type="PANTHER" id="PTHR30136">
    <property type="entry name" value="HELIX-TURN-HELIX TRANSCRIPTIONAL REGULATOR, ICLR FAMILY"/>
    <property type="match status" value="1"/>
</dbReference>
<dbReference type="PANTHER" id="PTHR30136:SF38">
    <property type="entry name" value="TRANSCRIPTIONAL REGULATOR"/>
    <property type="match status" value="1"/>
</dbReference>
<dbReference type="Pfam" id="PF09339">
    <property type="entry name" value="HTH_IclR"/>
    <property type="match status" value="1"/>
</dbReference>
<dbReference type="Pfam" id="PF01614">
    <property type="entry name" value="IclR_C"/>
    <property type="match status" value="1"/>
</dbReference>
<dbReference type="SMART" id="SM00346">
    <property type="entry name" value="HTH_ICLR"/>
    <property type="match status" value="1"/>
</dbReference>
<dbReference type="SUPFAM" id="SSF55781">
    <property type="entry name" value="GAF domain-like"/>
    <property type="match status" value="1"/>
</dbReference>
<dbReference type="SUPFAM" id="SSF46785">
    <property type="entry name" value="Winged helix' DNA-binding domain"/>
    <property type="match status" value="1"/>
</dbReference>
<dbReference type="PROSITE" id="PS51077">
    <property type="entry name" value="HTH_ICLR"/>
    <property type="match status" value="1"/>
</dbReference>
<dbReference type="PROSITE" id="PS51078">
    <property type="entry name" value="ICLR_ED"/>
    <property type="match status" value="1"/>
</dbReference>
<accession>P77732</accession>
<proteinExistence type="evidence at protein level"/>
<reference key="1">
    <citation type="journal article" date="1997" name="DNA Res.">
        <title>Construction of a contiguous 874-kb sequence of the Escherichia coli-K12 genome corresponding to 50.0-68.8 min on the linkage map and analysis of its sequence features.</title>
        <authorList>
            <person name="Yamamoto Y."/>
            <person name="Aiba H."/>
            <person name="Baba T."/>
            <person name="Hayashi K."/>
            <person name="Inada T."/>
            <person name="Isono K."/>
            <person name="Itoh T."/>
            <person name="Kimura S."/>
            <person name="Kitagawa M."/>
            <person name="Makino K."/>
            <person name="Miki T."/>
            <person name="Mitsuhashi N."/>
            <person name="Mizobuchi K."/>
            <person name="Mori H."/>
            <person name="Nakade S."/>
            <person name="Nakamura Y."/>
            <person name="Nashimoto H."/>
            <person name="Oshima T."/>
            <person name="Oyama S."/>
            <person name="Saito N."/>
            <person name="Sampei G."/>
            <person name="Satoh Y."/>
            <person name="Sivasundaram S."/>
            <person name="Tagami H."/>
            <person name="Takahashi H."/>
            <person name="Takeda J."/>
            <person name="Takemoto K."/>
            <person name="Uehara K."/>
            <person name="Wada C."/>
            <person name="Yamagata S."/>
            <person name="Horiuchi T."/>
        </authorList>
    </citation>
    <scope>NUCLEOTIDE SEQUENCE [LARGE SCALE GENOMIC DNA]</scope>
    <source>
        <strain>K12 / W3110 / ATCC 27325 / DSM 5911</strain>
    </source>
</reference>
<reference key="2">
    <citation type="journal article" date="1997" name="Science">
        <title>The complete genome sequence of Escherichia coli K-12.</title>
        <authorList>
            <person name="Blattner F.R."/>
            <person name="Plunkett G. III"/>
            <person name="Bloch C.A."/>
            <person name="Perna N.T."/>
            <person name="Burland V."/>
            <person name="Riley M."/>
            <person name="Collado-Vides J."/>
            <person name="Glasner J.D."/>
            <person name="Rode C.K."/>
            <person name="Mayhew G.F."/>
            <person name="Gregor J."/>
            <person name="Davis N.W."/>
            <person name="Kirkpatrick H.A."/>
            <person name="Goeden M.A."/>
            <person name="Rose D.J."/>
            <person name="Mau B."/>
            <person name="Shao Y."/>
        </authorList>
    </citation>
    <scope>NUCLEOTIDE SEQUENCE [LARGE SCALE GENOMIC DNA]</scope>
    <source>
        <strain>K12 / MG1655 / ATCC 47076</strain>
    </source>
</reference>
<reference key="3">
    <citation type="journal article" date="2006" name="Mol. Syst. Biol.">
        <title>Highly accurate genome sequences of Escherichia coli K-12 strains MG1655 and W3110.</title>
        <authorList>
            <person name="Hayashi K."/>
            <person name="Morooka N."/>
            <person name="Yamamoto Y."/>
            <person name="Fujita K."/>
            <person name="Isono K."/>
            <person name="Choi S."/>
            <person name="Ohtsubo E."/>
            <person name="Baba T."/>
            <person name="Wanner B.L."/>
            <person name="Mori H."/>
            <person name="Horiuchi T."/>
        </authorList>
    </citation>
    <scope>NUCLEOTIDE SEQUENCE [LARGE SCALE GENOMIC DNA]</scope>
    <source>
        <strain>K12 / W3110 / ATCC 27325 / DSM 5911</strain>
    </source>
</reference>
<sequence>MLESSKVPALTRAIDILNLIARIGPCSAATIIDTLGIPKSTAYLLLNELRRQRFLSLDHQENFCLWTRLVELSGHALSKMDLRELARPRLTQLMDTTGLLCHLGIIDNGSAYYILKVESSATISVRSHEGKSLSLYRSGIGKCLLAWQPAAVQQSIIEGLVWEQATPTTITHPQQLHEELARIRRQGWSYDNGEDYADVRCVAAPVFNANNELTAAISVVGTRLQINEEYRDYLAGKAIACARDISRLLGWKSPFDLQAS</sequence>
<protein>
    <recommendedName>
        <fullName>Uncharacterized HTH-type transcriptional regulator RhmR</fullName>
    </recommendedName>
</protein>
<evidence type="ECO:0000255" key="1">
    <source>
        <dbReference type="PROSITE-ProRule" id="PRU00393"/>
    </source>
</evidence>
<evidence type="ECO:0000255" key="2">
    <source>
        <dbReference type="PROSITE-ProRule" id="PRU00394"/>
    </source>
</evidence>
<name>RHMR_ECOLI</name>
<feature type="chain" id="PRO_0000201770" description="Uncharacterized HTH-type transcriptional regulator RhmR">
    <location>
        <begin position="1"/>
        <end position="260"/>
    </location>
</feature>
<feature type="domain" description="HTH iclR-type" evidence="1">
    <location>
        <begin position="7"/>
        <end position="67"/>
    </location>
</feature>
<feature type="domain" description="IclR-ED" evidence="2">
    <location>
        <begin position="82"/>
        <end position="251"/>
    </location>
</feature>
<feature type="DNA-binding region" description="H-T-H motif" evidence="1">
    <location>
        <begin position="28"/>
        <end position="47"/>
    </location>
</feature>
<gene>
    <name type="primary">rhmR</name>
    <name type="synonym">yfaX</name>
    <name type="ordered locus">b2248</name>
    <name type="ordered locus">JW2242</name>
</gene>
<organism>
    <name type="scientific">Escherichia coli (strain K12)</name>
    <dbReference type="NCBI Taxonomy" id="83333"/>
    <lineage>
        <taxon>Bacteria</taxon>
        <taxon>Pseudomonadati</taxon>
        <taxon>Pseudomonadota</taxon>
        <taxon>Gammaproteobacteria</taxon>
        <taxon>Enterobacterales</taxon>
        <taxon>Enterobacteriaceae</taxon>
        <taxon>Escherichia</taxon>
    </lineage>
</organism>
<comment type="interaction">
    <interactant intactId="EBI-549004">
        <id>P77732</id>
    </interactant>
    <interactant intactId="EBI-1117383">
        <id>P23862</id>
        <label>priC</label>
    </interactant>
    <organismsDiffer>false</organismsDiffer>
    <experiments>3</experiments>
</comment>
<comment type="miscellaneous">
    <text>Part of the rhmRDTA operon involved in L-rhamnonate utilization.</text>
</comment>